<feature type="chain" id="PRO_0000235115" description="4-diphosphocytidyl-2-C-methyl-D-erythritol kinase">
    <location>
        <begin position="1"/>
        <end position="319"/>
    </location>
</feature>
<feature type="active site" evidence="1">
    <location>
        <position position="18"/>
    </location>
</feature>
<feature type="active site" evidence="1">
    <location>
        <position position="145"/>
    </location>
</feature>
<feature type="binding site" evidence="1">
    <location>
        <begin position="103"/>
        <end position="113"/>
    </location>
    <ligand>
        <name>ATP</name>
        <dbReference type="ChEBI" id="CHEBI:30616"/>
    </ligand>
</feature>
<gene>
    <name evidence="1" type="primary">ispE</name>
    <name type="ordered locus">PMN2A_0279</name>
</gene>
<sequence length="319" mass="35688">MVPSKANEDFLIANAHAKINLHLEVLGIRSDGFHELAMVMQSINLSDQLKMIKRVDNTINLKSNNKEISNGDDNLIIKAAKLLRNKVENQELGVDIELEKNIPIGAGLAGGSTDAAATLLGLNKLWKLNLKIDELENLSKEIGSDIPFCISGGRQICFGRGEILEKLKFDQIQLGLVLVKDPSIQVSTPVAYKKYKEQFGESYLEDDRDFEIKRNSIRSIDWSDQSLFDNRKEIQNDLQKSIRPMTPEVEKSLNLLSSLPDSRLVSMSGSGPSCFALFQNYDQANKVLKEHVNEFERAGLSAWACSMMSNGVELRNEFT</sequence>
<dbReference type="EC" id="2.7.1.148" evidence="1"/>
<dbReference type="EMBL" id="CP000095">
    <property type="protein sequence ID" value="AAZ57771.1"/>
    <property type="molecule type" value="Genomic_DNA"/>
</dbReference>
<dbReference type="RefSeq" id="WP_011293813.1">
    <property type="nucleotide sequence ID" value="NC_007335.2"/>
</dbReference>
<dbReference type="SMR" id="Q46L57"/>
<dbReference type="STRING" id="59920.PMN2A_0279"/>
<dbReference type="KEGG" id="pmn:PMN2A_0279"/>
<dbReference type="HOGENOM" id="CLU_053057_1_1_3"/>
<dbReference type="OrthoDB" id="9809438at2"/>
<dbReference type="PhylomeDB" id="Q46L57"/>
<dbReference type="UniPathway" id="UPA00056">
    <property type="reaction ID" value="UER00094"/>
</dbReference>
<dbReference type="Proteomes" id="UP000002535">
    <property type="component" value="Chromosome"/>
</dbReference>
<dbReference type="GO" id="GO:0050515">
    <property type="term" value="F:4-(cytidine 5'-diphospho)-2-C-methyl-D-erythritol kinase activity"/>
    <property type="evidence" value="ECO:0007669"/>
    <property type="project" value="UniProtKB-UniRule"/>
</dbReference>
<dbReference type="GO" id="GO:0005524">
    <property type="term" value="F:ATP binding"/>
    <property type="evidence" value="ECO:0007669"/>
    <property type="project" value="UniProtKB-UniRule"/>
</dbReference>
<dbReference type="GO" id="GO:0019288">
    <property type="term" value="P:isopentenyl diphosphate biosynthetic process, methylerythritol 4-phosphate pathway"/>
    <property type="evidence" value="ECO:0007669"/>
    <property type="project" value="UniProtKB-UniRule"/>
</dbReference>
<dbReference type="GO" id="GO:0016114">
    <property type="term" value="P:terpenoid biosynthetic process"/>
    <property type="evidence" value="ECO:0007669"/>
    <property type="project" value="InterPro"/>
</dbReference>
<dbReference type="Gene3D" id="3.30.230.10">
    <property type="match status" value="1"/>
</dbReference>
<dbReference type="Gene3D" id="3.30.70.890">
    <property type="entry name" value="GHMP kinase, C-terminal domain"/>
    <property type="match status" value="1"/>
</dbReference>
<dbReference type="HAMAP" id="MF_00061">
    <property type="entry name" value="IspE"/>
    <property type="match status" value="1"/>
</dbReference>
<dbReference type="InterPro" id="IPR013750">
    <property type="entry name" value="GHMP_kinase_C_dom"/>
</dbReference>
<dbReference type="InterPro" id="IPR036554">
    <property type="entry name" value="GHMP_kinase_C_sf"/>
</dbReference>
<dbReference type="InterPro" id="IPR006204">
    <property type="entry name" value="GHMP_kinase_N_dom"/>
</dbReference>
<dbReference type="InterPro" id="IPR004424">
    <property type="entry name" value="IspE"/>
</dbReference>
<dbReference type="InterPro" id="IPR020568">
    <property type="entry name" value="Ribosomal_Su5_D2-typ_SF"/>
</dbReference>
<dbReference type="InterPro" id="IPR014721">
    <property type="entry name" value="Ribsml_uS5_D2-typ_fold_subgr"/>
</dbReference>
<dbReference type="NCBIfam" id="TIGR00154">
    <property type="entry name" value="ispE"/>
    <property type="match status" value="1"/>
</dbReference>
<dbReference type="NCBIfam" id="NF011202">
    <property type="entry name" value="PRK14608.1"/>
    <property type="match status" value="1"/>
</dbReference>
<dbReference type="PANTHER" id="PTHR43527">
    <property type="entry name" value="4-DIPHOSPHOCYTIDYL-2-C-METHYL-D-ERYTHRITOL KINASE, CHLOROPLASTIC"/>
    <property type="match status" value="1"/>
</dbReference>
<dbReference type="PANTHER" id="PTHR43527:SF2">
    <property type="entry name" value="4-DIPHOSPHOCYTIDYL-2-C-METHYL-D-ERYTHRITOL KINASE, CHLOROPLASTIC"/>
    <property type="match status" value="1"/>
</dbReference>
<dbReference type="Pfam" id="PF08544">
    <property type="entry name" value="GHMP_kinases_C"/>
    <property type="match status" value="1"/>
</dbReference>
<dbReference type="Pfam" id="PF00288">
    <property type="entry name" value="GHMP_kinases_N"/>
    <property type="match status" value="1"/>
</dbReference>
<dbReference type="PIRSF" id="PIRSF010376">
    <property type="entry name" value="IspE"/>
    <property type="match status" value="1"/>
</dbReference>
<dbReference type="SUPFAM" id="SSF55060">
    <property type="entry name" value="GHMP Kinase, C-terminal domain"/>
    <property type="match status" value="1"/>
</dbReference>
<dbReference type="SUPFAM" id="SSF54211">
    <property type="entry name" value="Ribosomal protein S5 domain 2-like"/>
    <property type="match status" value="1"/>
</dbReference>
<reference key="1">
    <citation type="journal article" date="2007" name="PLoS Genet.">
        <title>Patterns and implications of gene gain and loss in the evolution of Prochlorococcus.</title>
        <authorList>
            <person name="Kettler G.C."/>
            <person name="Martiny A.C."/>
            <person name="Huang K."/>
            <person name="Zucker J."/>
            <person name="Coleman M.L."/>
            <person name="Rodrigue S."/>
            <person name="Chen F."/>
            <person name="Lapidus A."/>
            <person name="Ferriera S."/>
            <person name="Johnson J."/>
            <person name="Steglich C."/>
            <person name="Church G.M."/>
            <person name="Richardson P."/>
            <person name="Chisholm S.W."/>
        </authorList>
    </citation>
    <scope>NUCLEOTIDE SEQUENCE [LARGE SCALE GENOMIC DNA]</scope>
    <source>
        <strain>NATL2A</strain>
    </source>
</reference>
<accession>Q46L57</accession>
<protein>
    <recommendedName>
        <fullName evidence="1">4-diphosphocytidyl-2-C-methyl-D-erythritol kinase</fullName>
        <shortName evidence="1">CMK</shortName>
        <ecNumber evidence="1">2.7.1.148</ecNumber>
    </recommendedName>
    <alternativeName>
        <fullName evidence="1">4-(cytidine-5'-diphospho)-2-C-methyl-D-erythritol kinase</fullName>
    </alternativeName>
</protein>
<name>ISPE_PROMT</name>
<keyword id="KW-0067">ATP-binding</keyword>
<keyword id="KW-0414">Isoprene biosynthesis</keyword>
<keyword id="KW-0418">Kinase</keyword>
<keyword id="KW-0547">Nucleotide-binding</keyword>
<keyword id="KW-1185">Reference proteome</keyword>
<keyword id="KW-0808">Transferase</keyword>
<proteinExistence type="inferred from homology"/>
<comment type="function">
    <text evidence="1">Catalyzes the phosphorylation of the position 2 hydroxy group of 4-diphosphocytidyl-2C-methyl-D-erythritol.</text>
</comment>
<comment type="catalytic activity">
    <reaction evidence="1">
        <text>4-CDP-2-C-methyl-D-erythritol + ATP = 4-CDP-2-C-methyl-D-erythritol 2-phosphate + ADP + H(+)</text>
        <dbReference type="Rhea" id="RHEA:18437"/>
        <dbReference type="ChEBI" id="CHEBI:15378"/>
        <dbReference type="ChEBI" id="CHEBI:30616"/>
        <dbReference type="ChEBI" id="CHEBI:57823"/>
        <dbReference type="ChEBI" id="CHEBI:57919"/>
        <dbReference type="ChEBI" id="CHEBI:456216"/>
        <dbReference type="EC" id="2.7.1.148"/>
    </reaction>
</comment>
<comment type="pathway">
    <text evidence="1">Isoprenoid biosynthesis; isopentenyl diphosphate biosynthesis via DXP pathway; isopentenyl diphosphate from 1-deoxy-D-xylulose 5-phosphate: step 3/6.</text>
</comment>
<comment type="similarity">
    <text evidence="1">Belongs to the GHMP kinase family. IspE subfamily.</text>
</comment>
<organism>
    <name type="scientific">Prochlorococcus marinus (strain NATL2A)</name>
    <dbReference type="NCBI Taxonomy" id="59920"/>
    <lineage>
        <taxon>Bacteria</taxon>
        <taxon>Bacillati</taxon>
        <taxon>Cyanobacteriota</taxon>
        <taxon>Cyanophyceae</taxon>
        <taxon>Synechococcales</taxon>
        <taxon>Prochlorococcaceae</taxon>
        <taxon>Prochlorococcus</taxon>
    </lineage>
</organism>
<evidence type="ECO:0000255" key="1">
    <source>
        <dbReference type="HAMAP-Rule" id="MF_00061"/>
    </source>
</evidence>